<feature type="chain" id="PRO_1000189713" description="Fluoride-specific ion channel FluC">
    <location>
        <begin position="1"/>
        <end position="126"/>
    </location>
</feature>
<feature type="transmembrane region" description="Helical" evidence="1">
    <location>
        <begin position="3"/>
        <end position="23"/>
    </location>
</feature>
<feature type="transmembrane region" description="Helical" evidence="1">
    <location>
        <begin position="35"/>
        <end position="55"/>
    </location>
</feature>
<feature type="transmembrane region" description="Helical" evidence="1">
    <location>
        <begin position="68"/>
        <end position="88"/>
    </location>
</feature>
<feature type="transmembrane region" description="Helical" evidence="1">
    <location>
        <begin position="103"/>
        <end position="123"/>
    </location>
</feature>
<feature type="binding site" evidence="1">
    <location>
        <position position="75"/>
    </location>
    <ligand>
        <name>Na(+)</name>
        <dbReference type="ChEBI" id="CHEBI:29101"/>
        <note>structural</note>
    </ligand>
</feature>
<feature type="binding site" evidence="1">
    <location>
        <position position="78"/>
    </location>
    <ligand>
        <name>Na(+)</name>
        <dbReference type="ChEBI" id="CHEBI:29101"/>
        <note>structural</note>
    </ligand>
</feature>
<proteinExistence type="inferred from homology"/>
<comment type="function">
    <text evidence="1">Fluoride-specific ion channel. Important for reducing fluoride concentration in the cell, thus reducing its toxicity.</text>
</comment>
<comment type="catalytic activity">
    <reaction evidence="1">
        <text>fluoride(in) = fluoride(out)</text>
        <dbReference type="Rhea" id="RHEA:76159"/>
        <dbReference type="ChEBI" id="CHEBI:17051"/>
    </reaction>
    <physiologicalReaction direction="left-to-right" evidence="1">
        <dbReference type="Rhea" id="RHEA:76160"/>
    </physiologicalReaction>
</comment>
<comment type="activity regulation">
    <text evidence="1">Na(+) is not transported, but it plays an essential structural role and its presence is essential for fluoride channel function.</text>
</comment>
<comment type="subcellular location">
    <subcellularLocation>
        <location evidence="1">Cell inner membrane</location>
        <topology evidence="1">Multi-pass membrane protein</topology>
    </subcellularLocation>
</comment>
<comment type="similarity">
    <text evidence="1">Belongs to the fluoride channel Fluc/FEX (TC 1.A.43) family.</text>
</comment>
<name>FLUC_PARP8</name>
<sequence>MYLSILAVGIGGALGSLFRWFLGLRLNALFPALPLGTLASNVIAGYIIGAAVAYFGRNPQIAPEWRLFIITGLMGGLSTFSTFSAEVVQHLQQGRLNWAAGEIAIHVTASVIATVLGITTVAVVTR</sequence>
<protein>
    <recommendedName>
        <fullName evidence="1">Fluoride-specific ion channel FluC</fullName>
    </recommendedName>
</protein>
<accession>B2JCE3</accession>
<reference key="1">
    <citation type="journal article" date="2014" name="Stand. Genomic Sci.">
        <title>Complete genome sequence of Burkholderia phymatum STM815(T), a broad host range and efficient nitrogen-fixing symbiont of Mimosa species.</title>
        <authorList>
            <person name="Moulin L."/>
            <person name="Klonowska A."/>
            <person name="Caroline B."/>
            <person name="Booth K."/>
            <person name="Vriezen J.A."/>
            <person name="Melkonian R."/>
            <person name="James E.K."/>
            <person name="Young J.P."/>
            <person name="Bena G."/>
            <person name="Hauser L."/>
            <person name="Land M."/>
            <person name="Kyrpides N."/>
            <person name="Bruce D."/>
            <person name="Chain P."/>
            <person name="Copeland A."/>
            <person name="Pitluck S."/>
            <person name="Woyke T."/>
            <person name="Lizotte-Waniewski M."/>
            <person name="Bristow J."/>
            <person name="Riley M."/>
        </authorList>
    </citation>
    <scope>NUCLEOTIDE SEQUENCE [LARGE SCALE GENOMIC DNA]</scope>
    <source>
        <strain>DSM 17167 / CIP 108236 / LMG 21445 / STM815</strain>
    </source>
</reference>
<gene>
    <name evidence="1" type="primary">fluC</name>
    <name evidence="1" type="synonym">crcB</name>
    <name type="ordered locus">Bphy_1762</name>
</gene>
<keyword id="KW-0997">Cell inner membrane</keyword>
<keyword id="KW-1003">Cell membrane</keyword>
<keyword id="KW-0407">Ion channel</keyword>
<keyword id="KW-0406">Ion transport</keyword>
<keyword id="KW-0472">Membrane</keyword>
<keyword id="KW-0479">Metal-binding</keyword>
<keyword id="KW-1185">Reference proteome</keyword>
<keyword id="KW-0915">Sodium</keyword>
<keyword id="KW-0812">Transmembrane</keyword>
<keyword id="KW-1133">Transmembrane helix</keyword>
<keyword id="KW-0813">Transport</keyword>
<evidence type="ECO:0000255" key="1">
    <source>
        <dbReference type="HAMAP-Rule" id="MF_00454"/>
    </source>
</evidence>
<dbReference type="EMBL" id="CP001043">
    <property type="protein sequence ID" value="ACC70944.1"/>
    <property type="molecule type" value="Genomic_DNA"/>
</dbReference>
<dbReference type="RefSeq" id="WP_012401154.1">
    <property type="nucleotide sequence ID" value="NC_010622.1"/>
</dbReference>
<dbReference type="SMR" id="B2JCE3"/>
<dbReference type="STRING" id="391038.Bphy_1762"/>
<dbReference type="KEGG" id="bph:Bphy_1762"/>
<dbReference type="eggNOG" id="COG0239">
    <property type="taxonomic scope" value="Bacteria"/>
</dbReference>
<dbReference type="HOGENOM" id="CLU_114342_3_3_4"/>
<dbReference type="OrthoDB" id="9806299at2"/>
<dbReference type="Proteomes" id="UP000001192">
    <property type="component" value="Chromosome 1"/>
</dbReference>
<dbReference type="GO" id="GO:0005886">
    <property type="term" value="C:plasma membrane"/>
    <property type="evidence" value="ECO:0007669"/>
    <property type="project" value="UniProtKB-SubCell"/>
</dbReference>
<dbReference type="GO" id="GO:0062054">
    <property type="term" value="F:fluoride channel activity"/>
    <property type="evidence" value="ECO:0007669"/>
    <property type="project" value="UniProtKB-UniRule"/>
</dbReference>
<dbReference type="GO" id="GO:0046872">
    <property type="term" value="F:metal ion binding"/>
    <property type="evidence" value="ECO:0007669"/>
    <property type="project" value="UniProtKB-KW"/>
</dbReference>
<dbReference type="GO" id="GO:0140114">
    <property type="term" value="P:cellular detoxification of fluoride"/>
    <property type="evidence" value="ECO:0007669"/>
    <property type="project" value="UniProtKB-UniRule"/>
</dbReference>
<dbReference type="HAMAP" id="MF_00454">
    <property type="entry name" value="FluC"/>
    <property type="match status" value="1"/>
</dbReference>
<dbReference type="InterPro" id="IPR003691">
    <property type="entry name" value="FluC"/>
</dbReference>
<dbReference type="NCBIfam" id="TIGR00494">
    <property type="entry name" value="crcB"/>
    <property type="match status" value="1"/>
</dbReference>
<dbReference type="NCBIfam" id="NF010792">
    <property type="entry name" value="PRK14196.1"/>
    <property type="match status" value="1"/>
</dbReference>
<dbReference type="PANTHER" id="PTHR28259">
    <property type="entry name" value="FLUORIDE EXPORT PROTEIN 1-RELATED"/>
    <property type="match status" value="1"/>
</dbReference>
<dbReference type="PANTHER" id="PTHR28259:SF1">
    <property type="entry name" value="FLUORIDE EXPORT PROTEIN 1-RELATED"/>
    <property type="match status" value="1"/>
</dbReference>
<dbReference type="Pfam" id="PF02537">
    <property type="entry name" value="CRCB"/>
    <property type="match status" value="1"/>
</dbReference>
<organism>
    <name type="scientific">Paraburkholderia phymatum (strain DSM 17167 / CIP 108236 / LMG 21445 / STM815)</name>
    <name type="common">Burkholderia phymatum</name>
    <dbReference type="NCBI Taxonomy" id="391038"/>
    <lineage>
        <taxon>Bacteria</taxon>
        <taxon>Pseudomonadati</taxon>
        <taxon>Pseudomonadota</taxon>
        <taxon>Betaproteobacteria</taxon>
        <taxon>Burkholderiales</taxon>
        <taxon>Burkholderiaceae</taxon>
        <taxon>Paraburkholderia</taxon>
    </lineage>
</organism>